<protein>
    <recommendedName>
        <fullName evidence="1">Flavin-dependent thymidylate synthase</fullName>
        <shortName evidence="1">FDTS</shortName>
        <ecNumber evidence="1">2.1.1.148</ecNumber>
    </recommendedName>
    <alternativeName>
        <fullName evidence="1">FAD-dependent thymidylate synthase</fullName>
    </alternativeName>
    <alternativeName>
        <fullName evidence="1">Thymidylate synthase ThyX</fullName>
        <shortName evidence="1">TS</shortName>
        <shortName evidence="1">TSase</shortName>
    </alternativeName>
</protein>
<organism>
    <name type="scientific">Pyrobaculum aerophilum (strain ATCC 51768 / DSM 7523 / JCM 9630 / CIP 104966 / NBRC 100827 / IM2)</name>
    <dbReference type="NCBI Taxonomy" id="178306"/>
    <lineage>
        <taxon>Archaea</taxon>
        <taxon>Thermoproteota</taxon>
        <taxon>Thermoprotei</taxon>
        <taxon>Thermoproteales</taxon>
        <taxon>Thermoproteaceae</taxon>
        <taxon>Pyrobaculum</taxon>
    </lineage>
</organism>
<reference key="1">
    <citation type="journal article" date="2002" name="Proc. Natl. Acad. Sci. U.S.A.">
        <title>Genome sequence of the hyperthermophilic crenarchaeon Pyrobaculum aerophilum.</title>
        <authorList>
            <person name="Fitz-Gibbon S.T."/>
            <person name="Ladner H."/>
            <person name="Kim U.-J."/>
            <person name="Stetter K.O."/>
            <person name="Simon M.I."/>
            <person name="Miller J.H."/>
        </authorList>
    </citation>
    <scope>NUCLEOTIDE SEQUENCE [LARGE SCALE GENOMIC DNA]</scope>
    <source>
        <strain>ATCC 51768 / DSM 7523 / JCM 9630 / CIP 104966 / NBRC 100827 / IM2</strain>
    </source>
</reference>
<keyword id="KW-0274">FAD</keyword>
<keyword id="KW-0285">Flavoprotein</keyword>
<keyword id="KW-0489">Methyltransferase</keyword>
<keyword id="KW-0521">NADP</keyword>
<keyword id="KW-0545">Nucleotide biosynthesis</keyword>
<keyword id="KW-1185">Reference proteome</keyword>
<keyword id="KW-0808">Transferase</keyword>
<accession>Q8ZWD6</accession>
<name>THYX_PYRAE</name>
<proteinExistence type="inferred from homology"/>
<comment type="function">
    <text evidence="1">Catalyzes the reductive methylation of 2'-deoxyuridine-5'-monophosphate (dUMP) to 2'-deoxythymidine-5'-monophosphate (dTMP) while utilizing 5,10-methylenetetrahydrofolate (mTHF) as the methyl donor, and NADPH and FADH(2) as the reductant.</text>
</comment>
<comment type="catalytic activity">
    <reaction evidence="1">
        <text>dUMP + (6R)-5,10-methylene-5,6,7,8-tetrahydrofolate + NADPH + H(+) = dTMP + (6S)-5,6,7,8-tetrahydrofolate + NADP(+)</text>
        <dbReference type="Rhea" id="RHEA:29043"/>
        <dbReference type="ChEBI" id="CHEBI:15378"/>
        <dbReference type="ChEBI" id="CHEBI:15636"/>
        <dbReference type="ChEBI" id="CHEBI:57453"/>
        <dbReference type="ChEBI" id="CHEBI:57783"/>
        <dbReference type="ChEBI" id="CHEBI:58349"/>
        <dbReference type="ChEBI" id="CHEBI:63528"/>
        <dbReference type="ChEBI" id="CHEBI:246422"/>
        <dbReference type="EC" id="2.1.1.148"/>
    </reaction>
</comment>
<comment type="cofactor">
    <cofactor evidence="1">
        <name>FAD</name>
        <dbReference type="ChEBI" id="CHEBI:57692"/>
    </cofactor>
    <text evidence="1">Binds 4 FAD per tetramer. Each FAD binding site is formed by three monomers.</text>
</comment>
<comment type="pathway">
    <text evidence="1">Pyrimidine metabolism; dTTP biosynthesis.</text>
</comment>
<comment type="subunit">
    <text evidence="1">Homotetramer.</text>
</comment>
<comment type="similarity">
    <text evidence="1">Belongs to the thymidylate synthase ThyX family.</text>
</comment>
<gene>
    <name evidence="1" type="primary">thyX</name>
    <name type="ordered locus">PAE1837</name>
</gene>
<sequence>MVILETPRVFLIASWGSEAVISAFTDALYRGVPWEEAVKAQAPDVIIKRISAFYRQGHWSVFEFMGAQFLVECSRACHTQFIRHRMASYWSESQRYVDYTKREIRFVVPKGFPADLLKRAYEDYARLREGFRPEYARMILPNATAVLFAVQMNARELLLNFAPLRCAYAAQAEIRHVCWQMFAHAWRLWPNLARLVWEDLPSLHRDFCTKVPRGEDCRLYAIKDAEEKHGPLPETPWLSALVHG</sequence>
<feature type="chain" id="PRO_0000175592" description="Flavin-dependent thymidylate synthase">
    <location>
        <begin position="1"/>
        <end position="244"/>
    </location>
</feature>
<feature type="domain" description="ThyX" evidence="2">
    <location>
        <begin position="7"/>
        <end position="199"/>
    </location>
</feature>
<feature type="short sequence motif" description="ThyX motif" evidence="1">
    <location>
        <begin position="83"/>
        <end position="93"/>
    </location>
</feature>
<feature type="active site" description="Involved in ionization of N3 of dUMP, leading to its activation" evidence="1">
    <location>
        <position position="165"/>
    </location>
</feature>
<feature type="binding site" evidence="1">
    <location>
        <position position="60"/>
    </location>
    <ligand>
        <name>FAD</name>
        <dbReference type="ChEBI" id="CHEBI:57692"/>
        <note>ligand shared between neighboring subunits</note>
    </ligand>
</feature>
<feature type="binding site" evidence="1">
    <location>
        <begin position="80"/>
        <end position="83"/>
    </location>
    <ligand>
        <name>dUMP</name>
        <dbReference type="ChEBI" id="CHEBI:246422"/>
        <note>ligand shared between dimeric partners</note>
    </ligand>
</feature>
<feature type="binding site" evidence="1">
    <location>
        <begin position="83"/>
        <end position="85"/>
    </location>
    <ligand>
        <name>FAD</name>
        <dbReference type="ChEBI" id="CHEBI:57692"/>
        <note>ligand shared between neighboring subunits</note>
    </ligand>
</feature>
<feature type="binding site" description="in other chain" evidence="1">
    <location>
        <begin position="93"/>
        <end position="95"/>
    </location>
    <ligand>
        <name>dUMP</name>
        <dbReference type="ChEBI" id="CHEBI:246422"/>
        <note>ligand shared between dimeric partners</note>
    </ligand>
</feature>
<feature type="binding site" description="in other chain" evidence="1">
    <location>
        <position position="137"/>
    </location>
    <ligand>
        <name>dUMP</name>
        <dbReference type="ChEBI" id="CHEBI:246422"/>
        <note>ligand shared between dimeric partners</note>
    </ligand>
</feature>
<feature type="binding site" evidence="1">
    <location>
        <begin position="153"/>
        <end position="155"/>
    </location>
    <ligand>
        <name>FAD</name>
        <dbReference type="ChEBI" id="CHEBI:57692"/>
        <note>ligand shared between neighboring subunits</note>
    </ligand>
</feature>
<feature type="binding site" evidence="1">
    <location>
        <position position="160"/>
    </location>
    <ligand>
        <name>FAD</name>
        <dbReference type="ChEBI" id="CHEBI:57692"/>
        <note>ligand shared between neighboring subunits</note>
    </ligand>
</feature>
<feature type="binding site" evidence="1">
    <location>
        <position position="165"/>
    </location>
    <ligand>
        <name>dUMP</name>
        <dbReference type="ChEBI" id="CHEBI:246422"/>
        <note>ligand shared between dimeric partners</note>
    </ligand>
</feature>
<evidence type="ECO:0000255" key="1">
    <source>
        <dbReference type="HAMAP-Rule" id="MF_01408"/>
    </source>
</evidence>
<evidence type="ECO:0000255" key="2">
    <source>
        <dbReference type="PROSITE-ProRule" id="PRU00661"/>
    </source>
</evidence>
<dbReference type="EC" id="2.1.1.148" evidence="1"/>
<dbReference type="EMBL" id="AE009441">
    <property type="protein sequence ID" value="AAL63766.1"/>
    <property type="molecule type" value="Genomic_DNA"/>
</dbReference>
<dbReference type="RefSeq" id="WP_011008237.1">
    <property type="nucleotide sequence ID" value="NC_003364.1"/>
</dbReference>
<dbReference type="SMR" id="Q8ZWD6"/>
<dbReference type="FunCoup" id="Q8ZWD6">
    <property type="interactions" value="16"/>
</dbReference>
<dbReference type="STRING" id="178306.PAE1837"/>
<dbReference type="EnsemblBacteria" id="AAL63766">
    <property type="protein sequence ID" value="AAL63766"/>
    <property type="gene ID" value="PAE1837"/>
</dbReference>
<dbReference type="GeneID" id="1466020"/>
<dbReference type="KEGG" id="pai:PAE1837"/>
<dbReference type="PATRIC" id="fig|178306.9.peg.1359"/>
<dbReference type="eggNOG" id="arCOG01883">
    <property type="taxonomic scope" value="Archaea"/>
</dbReference>
<dbReference type="HOGENOM" id="CLU_1136110_0_0_2"/>
<dbReference type="InParanoid" id="Q8ZWD6"/>
<dbReference type="UniPathway" id="UPA00575"/>
<dbReference type="Proteomes" id="UP000002439">
    <property type="component" value="Chromosome"/>
</dbReference>
<dbReference type="GO" id="GO:0050660">
    <property type="term" value="F:flavin adenine dinucleotide binding"/>
    <property type="evidence" value="ECO:0000318"/>
    <property type="project" value="GO_Central"/>
</dbReference>
<dbReference type="GO" id="GO:0070402">
    <property type="term" value="F:NADPH binding"/>
    <property type="evidence" value="ECO:0000318"/>
    <property type="project" value="GO_Central"/>
</dbReference>
<dbReference type="GO" id="GO:0050797">
    <property type="term" value="F:thymidylate synthase (FAD) activity"/>
    <property type="evidence" value="ECO:0000318"/>
    <property type="project" value="GO_Central"/>
</dbReference>
<dbReference type="GO" id="GO:0004799">
    <property type="term" value="F:thymidylate synthase activity"/>
    <property type="evidence" value="ECO:0000318"/>
    <property type="project" value="GO_Central"/>
</dbReference>
<dbReference type="GO" id="GO:0006231">
    <property type="term" value="P:dTMP biosynthetic process"/>
    <property type="evidence" value="ECO:0000318"/>
    <property type="project" value="GO_Central"/>
</dbReference>
<dbReference type="GO" id="GO:0006235">
    <property type="term" value="P:dTTP biosynthetic process"/>
    <property type="evidence" value="ECO:0007669"/>
    <property type="project" value="UniProtKB-UniRule"/>
</dbReference>
<dbReference type="GO" id="GO:0032259">
    <property type="term" value="P:methylation"/>
    <property type="evidence" value="ECO:0007669"/>
    <property type="project" value="UniProtKB-KW"/>
</dbReference>
<dbReference type="CDD" id="cd20175">
    <property type="entry name" value="ThyX"/>
    <property type="match status" value="1"/>
</dbReference>
<dbReference type="Gene3D" id="3.30.1360.170">
    <property type="match status" value="1"/>
</dbReference>
<dbReference type="HAMAP" id="MF_01408">
    <property type="entry name" value="ThyX"/>
    <property type="match status" value="1"/>
</dbReference>
<dbReference type="InterPro" id="IPR003669">
    <property type="entry name" value="Thymidylate_synthase_ThyX"/>
</dbReference>
<dbReference type="InterPro" id="IPR036098">
    <property type="entry name" value="Thymidylate_synthase_ThyX_sf"/>
</dbReference>
<dbReference type="NCBIfam" id="TIGR02170">
    <property type="entry name" value="thyX"/>
    <property type="match status" value="1"/>
</dbReference>
<dbReference type="PANTHER" id="PTHR34934">
    <property type="entry name" value="FLAVIN-DEPENDENT THYMIDYLATE SYNTHASE"/>
    <property type="match status" value="1"/>
</dbReference>
<dbReference type="PANTHER" id="PTHR34934:SF1">
    <property type="entry name" value="FLAVIN-DEPENDENT THYMIDYLATE SYNTHASE"/>
    <property type="match status" value="1"/>
</dbReference>
<dbReference type="Pfam" id="PF02511">
    <property type="entry name" value="Thy1"/>
    <property type="match status" value="1"/>
</dbReference>
<dbReference type="SUPFAM" id="SSF69796">
    <property type="entry name" value="Thymidylate synthase-complementing protein Thy1"/>
    <property type="match status" value="1"/>
</dbReference>
<dbReference type="PROSITE" id="PS51331">
    <property type="entry name" value="THYX"/>
    <property type="match status" value="1"/>
</dbReference>